<accession>Q8E6M1</accession>
<organism>
    <name type="scientific">Streptococcus agalactiae serotype III (strain NEM316)</name>
    <dbReference type="NCBI Taxonomy" id="211110"/>
    <lineage>
        <taxon>Bacteria</taxon>
        <taxon>Bacillati</taxon>
        <taxon>Bacillota</taxon>
        <taxon>Bacilli</taxon>
        <taxon>Lactobacillales</taxon>
        <taxon>Streptococcaceae</taxon>
        <taxon>Streptococcus</taxon>
    </lineage>
</organism>
<comment type="function">
    <text evidence="1">Bidirectionally degrades single-stranded DNA into large acid-insoluble oligonucleotides, which are then degraded further into small acid-soluble oligonucleotides.</text>
</comment>
<comment type="catalytic activity">
    <reaction evidence="1">
        <text>Exonucleolytic cleavage in either 5'- to 3'- or 3'- to 5'-direction to yield nucleoside 5'-phosphates.</text>
        <dbReference type="EC" id="3.1.11.6"/>
    </reaction>
</comment>
<comment type="subunit">
    <text evidence="1">Heterooligomer composed of large and small subunits.</text>
</comment>
<comment type="subcellular location">
    <subcellularLocation>
        <location evidence="1">Cytoplasm</location>
    </subcellularLocation>
</comment>
<comment type="similarity">
    <text evidence="1">Belongs to the XseA family.</text>
</comment>
<gene>
    <name evidence="1" type="primary">xseA</name>
    <name type="ordered locus">gbs0542</name>
</gene>
<proteinExistence type="inferred from homology"/>
<name>EX7L_STRA3</name>
<feature type="chain" id="PRO_0000197887" description="Exodeoxyribonuclease 7 large subunit">
    <location>
        <begin position="1"/>
        <end position="446"/>
    </location>
</feature>
<sequence length="446" mass="50745">MSDYLSVSTLTKYLKLKFDKDPYLERVYLTGQVSNFRRRPNHQYFSLKDDKSVIQATMWSGQFKKLGFELEEGMKVNVVGRVQLYEPSGSYSIIVEKAEPDGIGALAIQFEQLKKKLSQSGYFDDRHKQLIPQFVRKIGVVTSPSGAVIRDIITTVSRRFPGVEILLFPTKVQGEGAAQEIAQTIALANEKKDLDLLIVGRGGGSIEDLWAFNEECVVEAIFESRLPVISSVGHETDTTLADFVADRRAATPTAAAELATPVTKIDILSWITERENRMYQSSLRLIRTKEERLQKSKQSVIFRQPERLYDGFLQKLDNLNQQLTYSMRDKLQTVRQKQGLLHQKLQGIDLKQRIHIYQERVVQSRRLLSSTMTSQYDSKLARFEKAQDALISLDSSRIVARGYAIIEKNHTLVSTTNGINEGDHLQVKMQDGLLEVEVKDVRQENI</sequence>
<dbReference type="EC" id="3.1.11.6" evidence="1"/>
<dbReference type="EMBL" id="AL766846">
    <property type="protein sequence ID" value="CAD46186.1"/>
    <property type="molecule type" value="Genomic_DNA"/>
</dbReference>
<dbReference type="RefSeq" id="WP_001286947.1">
    <property type="nucleotide sequence ID" value="NC_004368.1"/>
</dbReference>
<dbReference type="SMR" id="Q8E6M1"/>
<dbReference type="KEGG" id="san:gbs0542"/>
<dbReference type="eggNOG" id="COG1570">
    <property type="taxonomic scope" value="Bacteria"/>
</dbReference>
<dbReference type="HOGENOM" id="CLU_023625_3_1_9"/>
<dbReference type="Proteomes" id="UP000000823">
    <property type="component" value="Chromosome"/>
</dbReference>
<dbReference type="GO" id="GO:0005737">
    <property type="term" value="C:cytoplasm"/>
    <property type="evidence" value="ECO:0007669"/>
    <property type="project" value="UniProtKB-SubCell"/>
</dbReference>
<dbReference type="GO" id="GO:0009318">
    <property type="term" value="C:exodeoxyribonuclease VII complex"/>
    <property type="evidence" value="ECO:0007669"/>
    <property type="project" value="InterPro"/>
</dbReference>
<dbReference type="GO" id="GO:0008855">
    <property type="term" value="F:exodeoxyribonuclease VII activity"/>
    <property type="evidence" value="ECO:0007669"/>
    <property type="project" value="UniProtKB-UniRule"/>
</dbReference>
<dbReference type="GO" id="GO:0003676">
    <property type="term" value="F:nucleic acid binding"/>
    <property type="evidence" value="ECO:0007669"/>
    <property type="project" value="InterPro"/>
</dbReference>
<dbReference type="GO" id="GO:0006308">
    <property type="term" value="P:DNA catabolic process"/>
    <property type="evidence" value="ECO:0007669"/>
    <property type="project" value="UniProtKB-UniRule"/>
</dbReference>
<dbReference type="CDD" id="cd04489">
    <property type="entry name" value="ExoVII_LU_OBF"/>
    <property type="match status" value="1"/>
</dbReference>
<dbReference type="HAMAP" id="MF_00378">
    <property type="entry name" value="Exonuc_7_L"/>
    <property type="match status" value="1"/>
</dbReference>
<dbReference type="InterPro" id="IPR003753">
    <property type="entry name" value="Exonuc_VII_L"/>
</dbReference>
<dbReference type="InterPro" id="IPR020579">
    <property type="entry name" value="Exonuc_VII_lsu_C"/>
</dbReference>
<dbReference type="InterPro" id="IPR025824">
    <property type="entry name" value="OB-fold_nuc-bd_dom"/>
</dbReference>
<dbReference type="NCBIfam" id="TIGR00237">
    <property type="entry name" value="xseA"/>
    <property type="match status" value="1"/>
</dbReference>
<dbReference type="PANTHER" id="PTHR30008">
    <property type="entry name" value="EXODEOXYRIBONUCLEASE 7 LARGE SUBUNIT"/>
    <property type="match status" value="1"/>
</dbReference>
<dbReference type="PANTHER" id="PTHR30008:SF0">
    <property type="entry name" value="EXODEOXYRIBONUCLEASE 7 LARGE SUBUNIT"/>
    <property type="match status" value="1"/>
</dbReference>
<dbReference type="Pfam" id="PF02601">
    <property type="entry name" value="Exonuc_VII_L"/>
    <property type="match status" value="1"/>
</dbReference>
<dbReference type="Pfam" id="PF13742">
    <property type="entry name" value="tRNA_anti_2"/>
    <property type="match status" value="1"/>
</dbReference>
<protein>
    <recommendedName>
        <fullName evidence="1">Exodeoxyribonuclease 7 large subunit</fullName>
        <ecNumber evidence="1">3.1.11.6</ecNumber>
    </recommendedName>
    <alternativeName>
        <fullName evidence="1">Exodeoxyribonuclease VII large subunit</fullName>
        <shortName evidence="1">Exonuclease VII large subunit</shortName>
    </alternativeName>
</protein>
<reference key="1">
    <citation type="journal article" date="2002" name="Mol. Microbiol.">
        <title>Genome sequence of Streptococcus agalactiae, a pathogen causing invasive neonatal disease.</title>
        <authorList>
            <person name="Glaser P."/>
            <person name="Rusniok C."/>
            <person name="Buchrieser C."/>
            <person name="Chevalier F."/>
            <person name="Frangeul L."/>
            <person name="Msadek T."/>
            <person name="Zouine M."/>
            <person name="Couve E."/>
            <person name="Lalioui L."/>
            <person name="Poyart C."/>
            <person name="Trieu-Cuot P."/>
            <person name="Kunst F."/>
        </authorList>
    </citation>
    <scope>NUCLEOTIDE SEQUENCE [LARGE SCALE GENOMIC DNA]</scope>
    <source>
        <strain>NEM316</strain>
    </source>
</reference>
<keyword id="KW-0963">Cytoplasm</keyword>
<keyword id="KW-0269">Exonuclease</keyword>
<keyword id="KW-0378">Hydrolase</keyword>
<keyword id="KW-0540">Nuclease</keyword>
<evidence type="ECO:0000255" key="1">
    <source>
        <dbReference type="HAMAP-Rule" id="MF_00378"/>
    </source>
</evidence>